<accession>B7NEC5</accession>
<keyword id="KW-0997">Cell inner membrane</keyword>
<keyword id="KW-1003">Cell membrane</keyword>
<keyword id="KW-0472">Membrane</keyword>
<keyword id="KW-0812">Transmembrane</keyword>
<keyword id="KW-1133">Transmembrane helix</keyword>
<dbReference type="EMBL" id="CU928163">
    <property type="protein sequence ID" value="CAR15125.1"/>
    <property type="molecule type" value="Genomic_DNA"/>
</dbReference>
<dbReference type="RefSeq" id="WP_000626187.1">
    <property type="nucleotide sequence ID" value="NC_011751.1"/>
</dbReference>
<dbReference type="RefSeq" id="YP_002414630.1">
    <property type="nucleotide sequence ID" value="NC_011751.1"/>
</dbReference>
<dbReference type="SMR" id="B7NEC5"/>
<dbReference type="STRING" id="585056.ECUMN_3979"/>
<dbReference type="GeneID" id="93778499"/>
<dbReference type="KEGG" id="eum:ECUMN_3979"/>
<dbReference type="PATRIC" id="fig|585056.7.peg.4153"/>
<dbReference type="HOGENOM" id="CLU_151816_0_0_6"/>
<dbReference type="Proteomes" id="UP000007097">
    <property type="component" value="Chromosome"/>
</dbReference>
<dbReference type="GO" id="GO:0005886">
    <property type="term" value="C:plasma membrane"/>
    <property type="evidence" value="ECO:0007669"/>
    <property type="project" value="UniProtKB-SubCell"/>
</dbReference>
<dbReference type="HAMAP" id="MF_01088">
    <property type="entry name" value="UspB"/>
    <property type="match status" value="1"/>
</dbReference>
<dbReference type="InterPro" id="IPR019598">
    <property type="entry name" value="Universal_stress_protein_B"/>
</dbReference>
<dbReference type="NCBIfam" id="NF003435">
    <property type="entry name" value="PRK04960.1"/>
    <property type="match status" value="1"/>
</dbReference>
<dbReference type="Pfam" id="PF10625">
    <property type="entry name" value="UspB"/>
    <property type="match status" value="1"/>
</dbReference>
<reference key="1">
    <citation type="journal article" date="2009" name="PLoS Genet.">
        <title>Organised genome dynamics in the Escherichia coli species results in highly diverse adaptive paths.</title>
        <authorList>
            <person name="Touchon M."/>
            <person name="Hoede C."/>
            <person name="Tenaillon O."/>
            <person name="Barbe V."/>
            <person name="Baeriswyl S."/>
            <person name="Bidet P."/>
            <person name="Bingen E."/>
            <person name="Bonacorsi S."/>
            <person name="Bouchier C."/>
            <person name="Bouvet O."/>
            <person name="Calteau A."/>
            <person name="Chiapello H."/>
            <person name="Clermont O."/>
            <person name="Cruveiller S."/>
            <person name="Danchin A."/>
            <person name="Diard M."/>
            <person name="Dossat C."/>
            <person name="Karoui M.E."/>
            <person name="Frapy E."/>
            <person name="Garry L."/>
            <person name="Ghigo J.M."/>
            <person name="Gilles A.M."/>
            <person name="Johnson J."/>
            <person name="Le Bouguenec C."/>
            <person name="Lescat M."/>
            <person name="Mangenot S."/>
            <person name="Martinez-Jehanne V."/>
            <person name="Matic I."/>
            <person name="Nassif X."/>
            <person name="Oztas S."/>
            <person name="Petit M.A."/>
            <person name="Pichon C."/>
            <person name="Rouy Z."/>
            <person name="Ruf C.S."/>
            <person name="Schneider D."/>
            <person name="Tourret J."/>
            <person name="Vacherie B."/>
            <person name="Vallenet D."/>
            <person name="Medigue C."/>
            <person name="Rocha E.P.C."/>
            <person name="Denamur E."/>
        </authorList>
    </citation>
    <scope>NUCLEOTIDE SEQUENCE [LARGE SCALE GENOMIC DNA]</scope>
    <source>
        <strain>UMN026 / ExPEC</strain>
    </source>
</reference>
<comment type="subcellular location">
    <subcellularLocation>
        <location evidence="1">Cell inner membrane</location>
        <topology evidence="1">Multi-pass membrane protein</topology>
    </subcellularLocation>
</comment>
<comment type="similarity">
    <text evidence="1">Belongs to the universal stress protein B family.</text>
</comment>
<organism>
    <name type="scientific">Escherichia coli O17:K52:H18 (strain UMN026 / ExPEC)</name>
    <dbReference type="NCBI Taxonomy" id="585056"/>
    <lineage>
        <taxon>Bacteria</taxon>
        <taxon>Pseudomonadati</taxon>
        <taxon>Pseudomonadota</taxon>
        <taxon>Gammaproteobacteria</taxon>
        <taxon>Enterobacterales</taxon>
        <taxon>Enterobacteriaceae</taxon>
        <taxon>Escherichia</taxon>
    </lineage>
</organism>
<name>USPB_ECOLU</name>
<evidence type="ECO:0000255" key="1">
    <source>
        <dbReference type="HAMAP-Rule" id="MF_01088"/>
    </source>
</evidence>
<gene>
    <name evidence="1" type="primary">uspB</name>
    <name type="ordered locus">ECUMN_3979</name>
</gene>
<protein>
    <recommendedName>
        <fullName evidence="1">Universal stress protein B</fullName>
    </recommendedName>
</protein>
<feature type="chain" id="PRO_1000136915" description="Universal stress protein B">
    <location>
        <begin position="1"/>
        <end position="111"/>
    </location>
</feature>
<feature type="transmembrane region" description="Helical" evidence="1">
    <location>
        <begin position="1"/>
        <end position="21"/>
    </location>
</feature>
<feature type="transmembrane region" description="Helical" evidence="1">
    <location>
        <begin position="90"/>
        <end position="110"/>
    </location>
</feature>
<proteinExistence type="inferred from homology"/>
<sequence length="111" mass="13027">MISTVALFWALCVVCIVNMARYFSSLRALLVVLRNCDPLLYQYVDGGGFFTSHGQPNKQVRLVWYIYAQRYRDHHDDEFIRRCERVRRQFILTSALCGLVVVSLIALMIWH</sequence>